<feature type="chain" id="PRO_1000057437" description="Sulfate adenylyltransferase subunit 2">
    <location>
        <begin position="1"/>
        <end position="302"/>
    </location>
</feature>
<reference key="1">
    <citation type="journal article" date="2008" name="J. Bacteriol.">
        <title>The pangenome structure of Escherichia coli: comparative genomic analysis of E. coli commensal and pathogenic isolates.</title>
        <authorList>
            <person name="Rasko D.A."/>
            <person name="Rosovitz M.J."/>
            <person name="Myers G.S.A."/>
            <person name="Mongodin E.F."/>
            <person name="Fricke W.F."/>
            <person name="Gajer P."/>
            <person name="Crabtree J."/>
            <person name="Sebaihia M."/>
            <person name="Thomson N.R."/>
            <person name="Chaudhuri R."/>
            <person name="Henderson I.R."/>
            <person name="Sperandio V."/>
            <person name="Ravel J."/>
        </authorList>
    </citation>
    <scope>NUCLEOTIDE SEQUENCE [LARGE SCALE GENOMIC DNA]</scope>
    <source>
        <strain>HS</strain>
    </source>
</reference>
<dbReference type="EC" id="2.7.7.4" evidence="1"/>
<dbReference type="EMBL" id="CP000802">
    <property type="protein sequence ID" value="ABV07135.1"/>
    <property type="molecule type" value="Genomic_DNA"/>
</dbReference>
<dbReference type="RefSeq" id="WP_000372110.1">
    <property type="nucleotide sequence ID" value="NC_009800.1"/>
</dbReference>
<dbReference type="SMR" id="A8A3N1"/>
<dbReference type="KEGG" id="ecx:EcHS_A2890"/>
<dbReference type="HOGENOM" id="CLU_043026_0_0_6"/>
<dbReference type="UniPathway" id="UPA00140">
    <property type="reaction ID" value="UER00204"/>
</dbReference>
<dbReference type="GO" id="GO:0005524">
    <property type="term" value="F:ATP binding"/>
    <property type="evidence" value="ECO:0007669"/>
    <property type="project" value="UniProtKB-KW"/>
</dbReference>
<dbReference type="GO" id="GO:0004781">
    <property type="term" value="F:sulfate adenylyltransferase (ATP) activity"/>
    <property type="evidence" value="ECO:0007669"/>
    <property type="project" value="UniProtKB-UniRule"/>
</dbReference>
<dbReference type="GO" id="GO:0070814">
    <property type="term" value="P:hydrogen sulfide biosynthetic process"/>
    <property type="evidence" value="ECO:0007669"/>
    <property type="project" value="UniProtKB-UniRule"/>
</dbReference>
<dbReference type="GO" id="GO:0000103">
    <property type="term" value="P:sulfate assimilation"/>
    <property type="evidence" value="ECO:0007669"/>
    <property type="project" value="UniProtKB-UniRule"/>
</dbReference>
<dbReference type="CDD" id="cd23946">
    <property type="entry name" value="Sulfate_adenylyltransferase_2"/>
    <property type="match status" value="1"/>
</dbReference>
<dbReference type="FunFam" id="3.40.50.620:FF:000002">
    <property type="entry name" value="Sulfate adenylyltransferase subunit 2"/>
    <property type="match status" value="1"/>
</dbReference>
<dbReference type="Gene3D" id="3.40.50.620">
    <property type="entry name" value="HUPs"/>
    <property type="match status" value="1"/>
</dbReference>
<dbReference type="HAMAP" id="MF_00064">
    <property type="entry name" value="Sulf_adenylyltr_sub2"/>
    <property type="match status" value="1"/>
</dbReference>
<dbReference type="InterPro" id="IPR002500">
    <property type="entry name" value="PAPS_reduct_dom"/>
</dbReference>
<dbReference type="InterPro" id="IPR014729">
    <property type="entry name" value="Rossmann-like_a/b/a_fold"/>
</dbReference>
<dbReference type="InterPro" id="IPR011784">
    <property type="entry name" value="SO4_adenylTrfase_ssu"/>
</dbReference>
<dbReference type="InterPro" id="IPR050128">
    <property type="entry name" value="Sulfate_adenylyltrnsfr_sub2"/>
</dbReference>
<dbReference type="NCBIfam" id="TIGR02039">
    <property type="entry name" value="CysD"/>
    <property type="match status" value="1"/>
</dbReference>
<dbReference type="NCBIfam" id="NF003587">
    <property type="entry name" value="PRK05253.1"/>
    <property type="match status" value="1"/>
</dbReference>
<dbReference type="NCBIfam" id="NF009214">
    <property type="entry name" value="PRK12563.1"/>
    <property type="match status" value="1"/>
</dbReference>
<dbReference type="PANTHER" id="PTHR43196">
    <property type="entry name" value="SULFATE ADENYLYLTRANSFERASE SUBUNIT 2"/>
    <property type="match status" value="1"/>
</dbReference>
<dbReference type="PANTHER" id="PTHR43196:SF1">
    <property type="entry name" value="SULFATE ADENYLYLTRANSFERASE SUBUNIT 2"/>
    <property type="match status" value="1"/>
</dbReference>
<dbReference type="Pfam" id="PF01507">
    <property type="entry name" value="PAPS_reduct"/>
    <property type="match status" value="1"/>
</dbReference>
<dbReference type="PIRSF" id="PIRSF002936">
    <property type="entry name" value="CysDAde_trans"/>
    <property type="match status" value="1"/>
</dbReference>
<dbReference type="SUPFAM" id="SSF52402">
    <property type="entry name" value="Adenine nucleotide alpha hydrolases-like"/>
    <property type="match status" value="1"/>
</dbReference>
<sequence>MDQIRLTHLRQLEAESIHIIREVAAEFSNPVMLYSIGKDSSVMLHLARKAFYPGTLPFPLLHVDTGWKFREMYEFRDRTAKAYGCELLVHKNPEGVAMGINPFVHGSAKHTDIMKTEGLKQALNKYSFDAAFGGARRDEEKSRAKERIYSFRDRFHRWDPKNQRPELWHNYNGQINKGESIRVFPLSNWTEQDIWQYIWLENIDIVPLYLAAERPVLERDGMLMMIDDNRIDLQPGEVIKKRMVRFRTLGCWPLTGAVESNAQTLPEIIEEMLVSTTSERQGRVIDRDQAGSMELKKRQGYF</sequence>
<evidence type="ECO:0000255" key="1">
    <source>
        <dbReference type="HAMAP-Rule" id="MF_00064"/>
    </source>
</evidence>
<comment type="function">
    <text evidence="1">With CysN forms the ATP sulfurylase (ATPS) that catalyzes the adenylation of sulfate producing adenosine 5'-phosphosulfate (APS) and diphosphate, the first enzymatic step in sulfur assimilation pathway. APS synthesis involves the formation of a high-energy phosphoric-sulfuric acid anhydride bond driven by GTP hydrolysis by CysN coupled to ATP hydrolysis by CysD.</text>
</comment>
<comment type="catalytic activity">
    <reaction evidence="1">
        <text>sulfate + ATP + H(+) = adenosine 5'-phosphosulfate + diphosphate</text>
        <dbReference type="Rhea" id="RHEA:18133"/>
        <dbReference type="ChEBI" id="CHEBI:15378"/>
        <dbReference type="ChEBI" id="CHEBI:16189"/>
        <dbReference type="ChEBI" id="CHEBI:30616"/>
        <dbReference type="ChEBI" id="CHEBI:33019"/>
        <dbReference type="ChEBI" id="CHEBI:58243"/>
        <dbReference type="EC" id="2.7.7.4"/>
    </reaction>
</comment>
<comment type="pathway">
    <text evidence="1">Sulfur metabolism; hydrogen sulfide biosynthesis; sulfite from sulfate: step 1/3.</text>
</comment>
<comment type="subunit">
    <text evidence="1">Heterodimer composed of CysD, the smaller subunit, and CysN.</text>
</comment>
<comment type="similarity">
    <text evidence="1">Belongs to the PAPS reductase family. CysD subfamily.</text>
</comment>
<name>CYSD_ECOHS</name>
<gene>
    <name evidence="1" type="primary">cysD</name>
    <name type="ordered locus">EcHS_A2890</name>
</gene>
<organism>
    <name type="scientific">Escherichia coli O9:H4 (strain HS)</name>
    <dbReference type="NCBI Taxonomy" id="331112"/>
    <lineage>
        <taxon>Bacteria</taxon>
        <taxon>Pseudomonadati</taxon>
        <taxon>Pseudomonadota</taxon>
        <taxon>Gammaproteobacteria</taxon>
        <taxon>Enterobacterales</taxon>
        <taxon>Enterobacteriaceae</taxon>
        <taxon>Escherichia</taxon>
    </lineage>
</organism>
<proteinExistence type="inferred from homology"/>
<protein>
    <recommendedName>
        <fullName evidence="1">Sulfate adenylyltransferase subunit 2</fullName>
        <ecNumber evidence="1">2.7.7.4</ecNumber>
    </recommendedName>
    <alternativeName>
        <fullName evidence="1">ATP-sulfurylase small subunit</fullName>
    </alternativeName>
    <alternativeName>
        <fullName evidence="1">Sulfate adenylate transferase</fullName>
        <shortName evidence="1">SAT</shortName>
    </alternativeName>
</protein>
<accession>A8A3N1</accession>
<keyword id="KW-0067">ATP-binding</keyword>
<keyword id="KW-0547">Nucleotide-binding</keyword>
<keyword id="KW-0548">Nucleotidyltransferase</keyword>
<keyword id="KW-0808">Transferase</keyword>